<protein>
    <recommendedName>
        <fullName>Probable chlorophyll(ide) b reductase NYC1, chloroplastic</fullName>
        <ecNumber>1.1.1.294</ecNumber>
    </recommendedName>
    <alternativeName>
        <fullName>Protein NON-YELLOW COLORING 1</fullName>
        <shortName>AtNYC1</shortName>
    </alternativeName>
</protein>
<reference key="1">
    <citation type="journal article" date="2007" name="Plant Cell">
        <title>Rice NON-YELLOW COLORING1 is involved in light-harvesting complex II and grana degradation during leaf senescence.</title>
        <authorList>
            <person name="Kusaba M."/>
            <person name="Ito H."/>
            <person name="Morita R."/>
            <person name="Iida S."/>
            <person name="Sato Y."/>
            <person name="Fujimoto M."/>
            <person name="Kawasaki S."/>
            <person name="Tanaka R."/>
            <person name="Hirochika H."/>
            <person name="Nishimura M."/>
            <person name="Tanaka A."/>
        </authorList>
    </citation>
    <scope>NUCLEOTIDE SEQUENCE [MRNA]</scope>
</reference>
<reference key="2">
    <citation type="journal article" date="1999" name="Nature">
        <title>Sequence and analysis of chromosome 4 of the plant Arabidopsis thaliana.</title>
        <authorList>
            <person name="Mayer K.F.X."/>
            <person name="Schueller C."/>
            <person name="Wambutt R."/>
            <person name="Murphy G."/>
            <person name="Volckaert G."/>
            <person name="Pohl T."/>
            <person name="Duesterhoeft A."/>
            <person name="Stiekema W."/>
            <person name="Entian K.-D."/>
            <person name="Terryn N."/>
            <person name="Harris B."/>
            <person name="Ansorge W."/>
            <person name="Brandt P."/>
            <person name="Grivell L.A."/>
            <person name="Rieger M."/>
            <person name="Weichselgartner M."/>
            <person name="de Simone V."/>
            <person name="Obermaier B."/>
            <person name="Mache R."/>
            <person name="Mueller M."/>
            <person name="Kreis M."/>
            <person name="Delseny M."/>
            <person name="Puigdomenech P."/>
            <person name="Watson M."/>
            <person name="Schmidtheini T."/>
            <person name="Reichert B."/>
            <person name="Portetelle D."/>
            <person name="Perez-Alonso M."/>
            <person name="Boutry M."/>
            <person name="Bancroft I."/>
            <person name="Vos P."/>
            <person name="Hoheisel J."/>
            <person name="Zimmermann W."/>
            <person name="Wedler H."/>
            <person name="Ridley P."/>
            <person name="Langham S.-A."/>
            <person name="McCullagh B."/>
            <person name="Bilham L."/>
            <person name="Robben J."/>
            <person name="van der Schueren J."/>
            <person name="Grymonprez B."/>
            <person name="Chuang Y.-J."/>
            <person name="Vandenbussche F."/>
            <person name="Braeken M."/>
            <person name="Weltjens I."/>
            <person name="Voet M."/>
            <person name="Bastiaens I."/>
            <person name="Aert R."/>
            <person name="Defoor E."/>
            <person name="Weitzenegger T."/>
            <person name="Bothe G."/>
            <person name="Ramsperger U."/>
            <person name="Hilbert H."/>
            <person name="Braun M."/>
            <person name="Holzer E."/>
            <person name="Brandt A."/>
            <person name="Peters S."/>
            <person name="van Staveren M."/>
            <person name="Dirkse W."/>
            <person name="Mooijman P."/>
            <person name="Klein Lankhorst R."/>
            <person name="Rose M."/>
            <person name="Hauf J."/>
            <person name="Koetter P."/>
            <person name="Berneiser S."/>
            <person name="Hempel S."/>
            <person name="Feldpausch M."/>
            <person name="Lamberth S."/>
            <person name="Van den Daele H."/>
            <person name="De Keyser A."/>
            <person name="Buysshaert C."/>
            <person name="Gielen J."/>
            <person name="Villarroel R."/>
            <person name="De Clercq R."/>
            <person name="van Montagu M."/>
            <person name="Rogers J."/>
            <person name="Cronin A."/>
            <person name="Quail M.A."/>
            <person name="Bray-Allen S."/>
            <person name="Clark L."/>
            <person name="Doggett J."/>
            <person name="Hall S."/>
            <person name="Kay M."/>
            <person name="Lennard N."/>
            <person name="McLay K."/>
            <person name="Mayes R."/>
            <person name="Pettett A."/>
            <person name="Rajandream M.A."/>
            <person name="Lyne M."/>
            <person name="Benes V."/>
            <person name="Rechmann S."/>
            <person name="Borkova D."/>
            <person name="Bloecker H."/>
            <person name="Scharfe M."/>
            <person name="Grimm M."/>
            <person name="Loehnert T.-H."/>
            <person name="Dose S."/>
            <person name="de Haan M."/>
            <person name="Maarse A.C."/>
            <person name="Schaefer M."/>
            <person name="Mueller-Auer S."/>
            <person name="Gabel C."/>
            <person name="Fuchs M."/>
            <person name="Fartmann B."/>
            <person name="Granderath K."/>
            <person name="Dauner D."/>
            <person name="Herzl A."/>
            <person name="Neumann S."/>
            <person name="Argiriou A."/>
            <person name="Vitale D."/>
            <person name="Liguori R."/>
            <person name="Piravandi E."/>
            <person name="Massenet O."/>
            <person name="Quigley F."/>
            <person name="Clabauld G."/>
            <person name="Muendlein A."/>
            <person name="Felber R."/>
            <person name="Schnabl S."/>
            <person name="Hiller R."/>
            <person name="Schmidt W."/>
            <person name="Lecharny A."/>
            <person name="Aubourg S."/>
            <person name="Chefdor F."/>
            <person name="Cooke R."/>
            <person name="Berger C."/>
            <person name="Monfort A."/>
            <person name="Casacuberta E."/>
            <person name="Gibbons T."/>
            <person name="Weber N."/>
            <person name="Vandenbol M."/>
            <person name="Bargues M."/>
            <person name="Terol J."/>
            <person name="Torres A."/>
            <person name="Perez-Perez A."/>
            <person name="Purnelle B."/>
            <person name="Bent E."/>
            <person name="Johnson S."/>
            <person name="Tacon D."/>
            <person name="Jesse T."/>
            <person name="Heijnen L."/>
            <person name="Schwarz S."/>
            <person name="Scholler P."/>
            <person name="Heber S."/>
            <person name="Francs P."/>
            <person name="Bielke C."/>
            <person name="Frishman D."/>
            <person name="Haase D."/>
            <person name="Lemcke K."/>
            <person name="Mewes H.-W."/>
            <person name="Stocker S."/>
            <person name="Zaccaria P."/>
            <person name="Bevan M."/>
            <person name="Wilson R.K."/>
            <person name="de la Bastide M."/>
            <person name="Habermann K."/>
            <person name="Parnell L."/>
            <person name="Dedhia N."/>
            <person name="Gnoj L."/>
            <person name="Schutz K."/>
            <person name="Huang E."/>
            <person name="Spiegel L."/>
            <person name="Sekhon M."/>
            <person name="Murray J."/>
            <person name="Sheet P."/>
            <person name="Cordes M."/>
            <person name="Abu-Threideh J."/>
            <person name="Stoneking T."/>
            <person name="Kalicki J."/>
            <person name="Graves T."/>
            <person name="Harmon G."/>
            <person name="Edwards J."/>
            <person name="Latreille P."/>
            <person name="Courtney L."/>
            <person name="Cloud J."/>
            <person name="Abbott A."/>
            <person name="Scott K."/>
            <person name="Johnson D."/>
            <person name="Minx P."/>
            <person name="Bentley D."/>
            <person name="Fulton B."/>
            <person name="Miller N."/>
            <person name="Greco T."/>
            <person name="Kemp K."/>
            <person name="Kramer J."/>
            <person name="Fulton L."/>
            <person name="Mardis E."/>
            <person name="Dante M."/>
            <person name="Pepin K."/>
            <person name="Hillier L.W."/>
            <person name="Nelson J."/>
            <person name="Spieth J."/>
            <person name="Ryan E."/>
            <person name="Andrews S."/>
            <person name="Geisel C."/>
            <person name="Layman D."/>
            <person name="Du H."/>
            <person name="Ali J."/>
            <person name="Berghoff A."/>
            <person name="Jones K."/>
            <person name="Drone K."/>
            <person name="Cotton M."/>
            <person name="Joshu C."/>
            <person name="Antonoiu B."/>
            <person name="Zidanic M."/>
            <person name="Strong C."/>
            <person name="Sun H."/>
            <person name="Lamar B."/>
            <person name="Yordan C."/>
            <person name="Ma P."/>
            <person name="Zhong J."/>
            <person name="Preston R."/>
            <person name="Vil D."/>
            <person name="Shekher M."/>
            <person name="Matero A."/>
            <person name="Shah R."/>
            <person name="Swaby I.K."/>
            <person name="O'Shaughnessy A."/>
            <person name="Rodriguez M."/>
            <person name="Hoffman J."/>
            <person name="Till S."/>
            <person name="Granat S."/>
            <person name="Shohdy N."/>
            <person name="Hasegawa A."/>
            <person name="Hameed A."/>
            <person name="Lodhi M."/>
            <person name="Johnson A."/>
            <person name="Chen E."/>
            <person name="Marra M.A."/>
            <person name="Martienssen R."/>
            <person name="McCombie W.R."/>
        </authorList>
    </citation>
    <scope>NUCLEOTIDE SEQUENCE [LARGE SCALE GENOMIC DNA]</scope>
    <source>
        <strain>cv. Columbia</strain>
    </source>
</reference>
<reference key="3">
    <citation type="journal article" date="2017" name="Plant J.">
        <title>Araport11: a complete reannotation of the Arabidopsis thaliana reference genome.</title>
        <authorList>
            <person name="Cheng C.Y."/>
            <person name="Krishnakumar V."/>
            <person name="Chan A.P."/>
            <person name="Thibaud-Nissen F."/>
            <person name="Schobel S."/>
            <person name="Town C.D."/>
        </authorList>
    </citation>
    <scope>GENOME REANNOTATION</scope>
    <source>
        <strain>cv. Columbia</strain>
    </source>
</reference>
<reference key="4">
    <citation type="journal article" date="2003" name="Science">
        <title>Empirical analysis of transcriptional activity in the Arabidopsis genome.</title>
        <authorList>
            <person name="Yamada K."/>
            <person name="Lim J."/>
            <person name="Dale J.M."/>
            <person name="Chen H."/>
            <person name="Shinn P."/>
            <person name="Palm C.J."/>
            <person name="Southwick A.M."/>
            <person name="Wu H.C."/>
            <person name="Kim C.J."/>
            <person name="Nguyen M."/>
            <person name="Pham P.K."/>
            <person name="Cheuk R.F."/>
            <person name="Karlin-Newmann G."/>
            <person name="Liu S.X."/>
            <person name="Lam B."/>
            <person name="Sakano H."/>
            <person name="Wu T."/>
            <person name="Yu G."/>
            <person name="Miranda M."/>
            <person name="Quach H.L."/>
            <person name="Tripp M."/>
            <person name="Chang C.H."/>
            <person name="Lee J.M."/>
            <person name="Toriumi M.J."/>
            <person name="Chan M.M."/>
            <person name="Tang C.C."/>
            <person name="Onodera C.S."/>
            <person name="Deng J.M."/>
            <person name="Akiyama K."/>
            <person name="Ansari Y."/>
            <person name="Arakawa T."/>
            <person name="Banh J."/>
            <person name="Banno F."/>
            <person name="Bowser L."/>
            <person name="Brooks S.Y."/>
            <person name="Carninci P."/>
            <person name="Chao Q."/>
            <person name="Choy N."/>
            <person name="Enju A."/>
            <person name="Goldsmith A.D."/>
            <person name="Gurjal M."/>
            <person name="Hansen N.F."/>
            <person name="Hayashizaki Y."/>
            <person name="Johnson-Hopson C."/>
            <person name="Hsuan V.W."/>
            <person name="Iida K."/>
            <person name="Karnes M."/>
            <person name="Khan S."/>
            <person name="Koesema E."/>
            <person name="Ishida J."/>
            <person name="Jiang P.X."/>
            <person name="Jones T."/>
            <person name="Kawai J."/>
            <person name="Kamiya A."/>
            <person name="Meyers C."/>
            <person name="Nakajima M."/>
            <person name="Narusaka M."/>
            <person name="Seki M."/>
            <person name="Sakurai T."/>
            <person name="Satou M."/>
            <person name="Tamse R."/>
            <person name="Vaysberg M."/>
            <person name="Wallender E.K."/>
            <person name="Wong C."/>
            <person name="Yamamura Y."/>
            <person name="Yuan S."/>
            <person name="Shinozaki K."/>
            <person name="Davis R.W."/>
            <person name="Theologis A."/>
            <person name="Ecker J.R."/>
        </authorList>
    </citation>
    <scope>NUCLEOTIDE SEQUENCE [LARGE SCALE MRNA]</scope>
    <source>
        <strain>cv. Columbia</strain>
    </source>
</reference>
<reference key="5">
    <citation type="journal article" date="2009" name="J. Biol. Chem.">
        <title>Participation of chlorophyll b reductase in the initial step of the degradation of light-harvesting chlorophyll a/b-protein complexes in Arabidopsis.</title>
        <authorList>
            <person name="Horie Y."/>
            <person name="Ito H."/>
            <person name="Kusaba M."/>
            <person name="Tanaka R."/>
            <person name="Tanaka A."/>
        </authorList>
    </citation>
    <scope>FUNCTION</scope>
    <scope>DISRUPTION PHENOTYPE</scope>
    <source>
        <strain>cv. Columbia</strain>
    </source>
</reference>
<reference key="6">
    <citation type="journal article" date="2012" name="Plant Cell">
        <title>STAY-GREEN and chlorophyll catabolic enzymes interact at light-harvesting complex II for chlorophyll detoxification during leaf senescence in Arabidopsis.</title>
        <authorList>
            <person name="Sakuraba Y."/>
            <person name="Schelbert S."/>
            <person name="Park S.Y."/>
            <person name="Han S.H."/>
            <person name="Lee B.D."/>
            <person name="Andres C.B."/>
            <person name="Kessler F."/>
            <person name="Hortensteiner S."/>
            <person name="Paek N.C."/>
        </authorList>
    </citation>
    <scope>SUBCELLULAR LOCATION</scope>
    <scope>INTERACTION WITH SGR1; RCCR; NOL AND LHCII COMPLEX</scope>
</reference>
<reference key="7">
    <citation type="journal article" date="2013" name="Biochem. Biophys. Res. Commun.">
        <title>7-Hydroxymethyl chlorophyll a reductase functions in metabolic channeling of chlorophyll breakdown intermediates during leaf senescence.</title>
        <authorList>
            <person name="Sakuraba Y."/>
            <person name="Kim Y.S."/>
            <person name="Yoo S.C."/>
            <person name="Hortensteiner S."/>
            <person name="Paek N.C."/>
        </authorList>
    </citation>
    <scope>INTERACTION WITH HCAR</scope>
    <scope>DEVELOPMENTAL STAGE</scope>
</reference>
<accession>Q93ZA0</accession>
<accession>Q9SVQ2</accession>
<keyword id="KW-0025">Alternative splicing</keyword>
<keyword id="KW-0881">Chlorophyll catabolism</keyword>
<keyword id="KW-0150">Chloroplast</keyword>
<keyword id="KW-0175">Coiled coil</keyword>
<keyword id="KW-0472">Membrane</keyword>
<keyword id="KW-0520">NAD</keyword>
<keyword id="KW-0560">Oxidoreductase</keyword>
<keyword id="KW-0934">Plastid</keyword>
<keyword id="KW-1185">Reference proteome</keyword>
<keyword id="KW-0793">Thylakoid</keyword>
<keyword id="KW-0809">Transit peptide</keyword>
<keyword id="KW-0812">Transmembrane</keyword>
<keyword id="KW-1133">Transmembrane helix</keyword>
<evidence type="ECO:0000250" key="1"/>
<evidence type="ECO:0000255" key="2"/>
<evidence type="ECO:0000269" key="3">
    <source>
    </source>
</evidence>
<evidence type="ECO:0000269" key="4">
    <source>
    </source>
</evidence>
<evidence type="ECO:0000269" key="5">
    <source>
    </source>
</evidence>
<evidence type="ECO:0000305" key="6"/>
<name>NYC1_ARATH</name>
<organism>
    <name type="scientific">Arabidopsis thaliana</name>
    <name type="common">Mouse-ear cress</name>
    <dbReference type="NCBI Taxonomy" id="3702"/>
    <lineage>
        <taxon>Eukaryota</taxon>
        <taxon>Viridiplantae</taxon>
        <taxon>Streptophyta</taxon>
        <taxon>Embryophyta</taxon>
        <taxon>Tracheophyta</taxon>
        <taxon>Spermatophyta</taxon>
        <taxon>Magnoliopsida</taxon>
        <taxon>eudicotyledons</taxon>
        <taxon>Gunneridae</taxon>
        <taxon>Pentapetalae</taxon>
        <taxon>rosids</taxon>
        <taxon>malvids</taxon>
        <taxon>Brassicales</taxon>
        <taxon>Brassicaceae</taxon>
        <taxon>Camelineae</taxon>
        <taxon>Arabidopsis</taxon>
    </lineage>
</organism>
<comment type="function">
    <text evidence="3">Involved in chlorophyll b degradation. Belongs to the chlorophyll catabolic enzymes (CCEs).</text>
</comment>
<comment type="catalytic activity">
    <reaction>
        <text>7(1)-hydroxychlorophyllide a + NAD(+) = chlorophyllide b + NADH + H(+)</text>
        <dbReference type="Rhea" id="RHEA:24768"/>
        <dbReference type="ChEBI" id="CHEBI:15378"/>
        <dbReference type="ChEBI" id="CHEBI:57540"/>
        <dbReference type="ChEBI" id="CHEBI:57945"/>
        <dbReference type="ChEBI" id="CHEBI:83356"/>
        <dbReference type="ChEBI" id="CHEBI:83357"/>
        <dbReference type="EC" id="1.1.1.294"/>
    </reaction>
</comment>
<comment type="catalytic activity">
    <reaction>
        <text>7(1)-hydroxychlorophyllide a + NADP(+) = chlorophyllide b + NADPH + H(+)</text>
        <dbReference type="Rhea" id="RHEA:24772"/>
        <dbReference type="ChEBI" id="CHEBI:15378"/>
        <dbReference type="ChEBI" id="CHEBI:57783"/>
        <dbReference type="ChEBI" id="CHEBI:58349"/>
        <dbReference type="ChEBI" id="CHEBI:83356"/>
        <dbReference type="ChEBI" id="CHEBI:83357"/>
        <dbReference type="EC" id="1.1.1.294"/>
    </reaction>
</comment>
<comment type="subunit">
    <text evidence="4 5">Interacts with NOL to form a complex that acts as a chlorophyll b reductase. Interacts with HCAR, RCCR, SGR1 and the LHCII complex. Part of a SGR1-CCE-LHCII complex, which acts in chlorophyll breakdown.</text>
</comment>
<comment type="subcellular location">
    <subcellularLocation>
        <location evidence="6">Plastid</location>
        <location evidence="6">Chloroplast thylakoid membrane</location>
        <topology evidence="6">Multi-pass membrane protein</topology>
    </subcellularLocation>
</comment>
<comment type="alternative products">
    <event type="alternative splicing"/>
    <isoform>
        <id>Q93ZA0-1</id>
        <name>1</name>
        <sequence type="displayed"/>
    </isoform>
    <text>A number of isoforms are produced. According to EST sequences.</text>
</comment>
<comment type="developmental stage">
    <text evidence="5">Up-regulated during senescence.</text>
</comment>
<comment type="disruption phenotype">
    <text evidence="3">Decrease in chlorophyll b during dark incubation substantially suppressed.</text>
</comment>
<comment type="similarity">
    <text evidence="6">Belongs to the short-chain dehydrogenases/reductases (SDR) family.</text>
</comment>
<comment type="sequence caution" evidence="6">
    <conflict type="erroneous gene model prediction">
        <sequence resource="EMBL-CDS" id="CAB41935"/>
    </conflict>
</comment>
<comment type="sequence caution" evidence="6">
    <conflict type="erroneous gene model prediction">
        <sequence resource="EMBL-CDS" id="CAB78367"/>
    </conflict>
</comment>
<sequence>MTTLTKIQVYPQVLEHRLFFRDPIRVGSRLTCRERSNRVYVHRCEKKVERKRKVEKFKGNGSWDSLKSGFLGFSKLGFLSKDEYNQKVENLEMVFSSVAVQIARYIVTMTSTGAILLIGFQLSGGDSSMNSLVWYSWLGGIIIGTMTGANMVLEDHYRAGPRNVVITGSTRGLGKALAREFLLSGDRVIVTSRSSESVDMTVKELEQNLKEIMSNASESARKKLSDAKVVGIACDVCKPEDVEKLSNFAVKELGSINIWINNAGTNKGFRPLLEFTEEDITQIVSTNLIGSILCTRGAMDVMSRQHSGGHIFNMDGAGSGGSSTPLTAVYGSTKCGLRQFHGSIVKESQKTNVGLHTASPGMVLTELLLSGSSIKNKQMFNIICELPETVARTLVPRMRVVKGSGKAVNYLTPPRILLAIVTSWLRRGRWFDDQGRALYAAEADRLRNWAENRTRLSLTDAMEMYTENTWVSVFSLSVVCAFIILQSTTPSSFPGT</sequence>
<gene>
    <name type="primary">NYC1</name>
    <name type="ordered locus">At4g13250</name>
    <name type="ORF">F17N18.140</name>
</gene>
<proteinExistence type="evidence at protein level"/>
<dbReference type="EC" id="1.1.1.294"/>
<dbReference type="EMBL" id="AB255028">
    <property type="protein sequence ID" value="BAF49743.1"/>
    <property type="molecule type" value="mRNA"/>
</dbReference>
<dbReference type="EMBL" id="AL049751">
    <property type="protein sequence ID" value="CAB41935.1"/>
    <property type="status" value="ALT_SEQ"/>
    <property type="molecule type" value="Genomic_DNA"/>
</dbReference>
<dbReference type="EMBL" id="AL161535">
    <property type="protein sequence ID" value="CAB78367.1"/>
    <property type="status" value="ALT_SEQ"/>
    <property type="molecule type" value="Genomic_DNA"/>
</dbReference>
<dbReference type="EMBL" id="CP002687">
    <property type="protein sequence ID" value="AEE83251.1"/>
    <property type="molecule type" value="Genomic_DNA"/>
</dbReference>
<dbReference type="EMBL" id="AY057697">
    <property type="protein sequence ID" value="AAL15327.1"/>
    <property type="molecule type" value="mRNA"/>
</dbReference>
<dbReference type="PIR" id="T07705">
    <property type="entry name" value="T07705"/>
</dbReference>
<dbReference type="RefSeq" id="NP_567400.1">
    <molecule id="Q93ZA0-1"/>
    <property type="nucleotide sequence ID" value="NM_117396.4"/>
</dbReference>
<dbReference type="SMR" id="Q93ZA0"/>
<dbReference type="BioGRID" id="12239">
    <property type="interactions" value="7"/>
</dbReference>
<dbReference type="FunCoup" id="Q93ZA0">
    <property type="interactions" value="92"/>
</dbReference>
<dbReference type="IntAct" id="Q93ZA0">
    <property type="interactions" value="2"/>
</dbReference>
<dbReference type="MINT" id="Q93ZA0"/>
<dbReference type="STRING" id="3702.Q93ZA0"/>
<dbReference type="PaxDb" id="3702-AT4G13250.1"/>
<dbReference type="ProteomicsDB" id="249354">
    <molecule id="Q93ZA0-1"/>
</dbReference>
<dbReference type="EnsemblPlants" id="AT4G13250.1">
    <molecule id="Q93ZA0-1"/>
    <property type="protein sequence ID" value="AT4G13250.1"/>
    <property type="gene ID" value="AT4G13250"/>
</dbReference>
<dbReference type="GeneID" id="826942"/>
<dbReference type="Gramene" id="AT4G13250.1">
    <molecule id="Q93ZA0-1"/>
    <property type="protein sequence ID" value="AT4G13250.1"/>
    <property type="gene ID" value="AT4G13250"/>
</dbReference>
<dbReference type="KEGG" id="ath:AT4G13250"/>
<dbReference type="Araport" id="AT4G13250"/>
<dbReference type="TAIR" id="AT4G13250">
    <property type="gene designation" value="NYC1"/>
</dbReference>
<dbReference type="eggNOG" id="KOG0725">
    <property type="taxonomic scope" value="Eukaryota"/>
</dbReference>
<dbReference type="HOGENOM" id="CLU_010194_46_1_1"/>
<dbReference type="InParanoid" id="Q93ZA0"/>
<dbReference type="OMA" id="GNGLWNS"/>
<dbReference type="OrthoDB" id="3592703at2759"/>
<dbReference type="PhylomeDB" id="Q93ZA0"/>
<dbReference type="BioCyc" id="ARA:AT4G13250-MONOMER"/>
<dbReference type="BioCyc" id="MetaCyc:AT4G13250-MONOMER"/>
<dbReference type="BRENDA" id="1.1.1.294">
    <property type="organism ID" value="399"/>
</dbReference>
<dbReference type="PRO" id="PR:Q93ZA0"/>
<dbReference type="Proteomes" id="UP000006548">
    <property type="component" value="Chromosome 4"/>
</dbReference>
<dbReference type="ExpressionAtlas" id="Q93ZA0">
    <property type="expression patterns" value="baseline and differential"/>
</dbReference>
<dbReference type="GO" id="GO:0009507">
    <property type="term" value="C:chloroplast"/>
    <property type="evidence" value="ECO:0000305"/>
    <property type="project" value="TAIR"/>
</dbReference>
<dbReference type="GO" id="GO:0009535">
    <property type="term" value="C:chloroplast thylakoid membrane"/>
    <property type="evidence" value="ECO:0007669"/>
    <property type="project" value="UniProtKB-SubCell"/>
</dbReference>
<dbReference type="GO" id="GO:0034256">
    <property type="term" value="F:chlorophyll(ide) b reductase activity"/>
    <property type="evidence" value="ECO:0000315"/>
    <property type="project" value="TAIR"/>
</dbReference>
<dbReference type="GO" id="GO:0015996">
    <property type="term" value="P:chlorophyll catabolic process"/>
    <property type="evidence" value="ECO:0000315"/>
    <property type="project" value="TAIR"/>
</dbReference>
<dbReference type="GO" id="GO:0010304">
    <property type="term" value="P:PSII associated light-harvesting complex II catabolic process"/>
    <property type="evidence" value="ECO:0000315"/>
    <property type="project" value="TAIR"/>
</dbReference>
<dbReference type="CDD" id="cd05233">
    <property type="entry name" value="SDR_c"/>
    <property type="match status" value="1"/>
</dbReference>
<dbReference type="FunFam" id="3.40.50.720:FF:000223">
    <property type="entry name" value="Chlorophyll(Ide) b reductase NOL, chloroplastic"/>
    <property type="match status" value="1"/>
</dbReference>
<dbReference type="Gene3D" id="3.40.50.720">
    <property type="entry name" value="NAD(P)-binding Rossmann-like Domain"/>
    <property type="match status" value="1"/>
</dbReference>
<dbReference type="InterPro" id="IPR052625">
    <property type="entry name" value="Chl_b_Red"/>
</dbReference>
<dbReference type="InterPro" id="IPR036291">
    <property type="entry name" value="NAD(P)-bd_dom_sf"/>
</dbReference>
<dbReference type="InterPro" id="IPR002347">
    <property type="entry name" value="SDR_fam"/>
</dbReference>
<dbReference type="PANTHER" id="PTHR24314:SF21">
    <property type="entry name" value="CHLOROPHYLL(IDE) B REDUCTASE NYC1, CHLOROPLASTIC-RELATED"/>
    <property type="match status" value="1"/>
</dbReference>
<dbReference type="PANTHER" id="PTHR24314">
    <property type="entry name" value="NON-SPECIFIC LIPID TRANSFER PROTEIN-RELATED"/>
    <property type="match status" value="1"/>
</dbReference>
<dbReference type="Pfam" id="PF00106">
    <property type="entry name" value="adh_short"/>
    <property type="match status" value="1"/>
</dbReference>
<dbReference type="PRINTS" id="PR00081">
    <property type="entry name" value="GDHRDH"/>
</dbReference>
<dbReference type="SUPFAM" id="SSF51735">
    <property type="entry name" value="NAD(P)-binding Rossmann-fold domains"/>
    <property type="match status" value="1"/>
</dbReference>
<feature type="transit peptide" description="Chloroplast" evidence="2">
    <location>
        <begin position="1"/>
        <end position="43"/>
    </location>
</feature>
<feature type="chain" id="PRO_0000391415" description="Probable chlorophyll(ide) b reductase NYC1, chloroplastic">
    <location>
        <begin position="44"/>
        <end position="496"/>
    </location>
</feature>
<feature type="transmembrane region" description="Helical" evidence="2">
    <location>
        <begin position="105"/>
        <end position="125"/>
    </location>
</feature>
<feature type="transmembrane region" description="Helical" evidence="2">
    <location>
        <begin position="132"/>
        <end position="152"/>
    </location>
</feature>
<feature type="transmembrane region" description="Helical" evidence="2">
    <location>
        <begin position="470"/>
        <end position="490"/>
    </location>
</feature>
<feature type="coiled-coil region" evidence="2">
    <location>
        <begin position="195"/>
        <end position="224"/>
    </location>
</feature>
<feature type="active site" description="Proton acceptor" evidence="1">
    <location>
        <position position="330"/>
    </location>
</feature>
<feature type="binding site" evidence="1">
    <location>
        <begin position="166"/>
        <end position="190"/>
    </location>
    <ligand>
        <name>NAD(+)</name>
        <dbReference type="ChEBI" id="CHEBI:57540"/>
    </ligand>
</feature>